<dbReference type="EMBL" id="AY819025">
    <property type="protein sequence ID" value="AAV68048.1"/>
    <property type="molecule type" value="mRNA"/>
</dbReference>
<dbReference type="EMBL" id="AK005694">
    <property type="protein sequence ID" value="BAB24192.1"/>
    <property type="molecule type" value="mRNA"/>
</dbReference>
<dbReference type="EMBL" id="AK017071">
    <property type="protein sequence ID" value="BAB30580.1"/>
    <property type="molecule type" value="mRNA"/>
</dbReference>
<dbReference type="EMBL" id="BC046278">
    <property type="protein sequence ID" value="AAH46278.1"/>
    <property type="molecule type" value="mRNA"/>
</dbReference>
<dbReference type="CCDS" id="CCDS21937.1"/>
<dbReference type="RefSeq" id="NP_080126.1">
    <property type="nucleotide sequence ID" value="NM_025850.3"/>
</dbReference>
<dbReference type="PDB" id="1WFU">
    <property type="method" value="NMR"/>
    <property type="chains" value="A=1-107"/>
</dbReference>
<dbReference type="PDBsum" id="1WFU"/>
<dbReference type="BMRB" id="Q9DAM9"/>
<dbReference type="SMR" id="Q9DAM9"/>
<dbReference type="FunCoup" id="Q9DAM9">
    <property type="interactions" value="302"/>
</dbReference>
<dbReference type="STRING" id="10090.ENSMUSP00000069013"/>
<dbReference type="PhosphoSitePlus" id="Q9DAM9"/>
<dbReference type="SwissPalm" id="Q9DAM9"/>
<dbReference type="PaxDb" id="10090-ENSMUSP00000069013"/>
<dbReference type="ProteomicsDB" id="271867"/>
<dbReference type="Antibodypedia" id="48696">
    <property type="antibodies" value="92 antibodies from 17 providers"/>
</dbReference>
<dbReference type="DNASU" id="66930"/>
<dbReference type="Ensembl" id="ENSMUST00000065359.12">
    <property type="protein sequence ID" value="ENSMUSP00000069013.6"/>
    <property type="gene ID" value="ENSMUSG00000053111.14"/>
</dbReference>
<dbReference type="GeneID" id="66930"/>
<dbReference type="KEGG" id="mmu:66930"/>
<dbReference type="UCSC" id="uc009kdn.1">
    <property type="organism name" value="mouse"/>
</dbReference>
<dbReference type="AGR" id="MGI:1914180"/>
<dbReference type="CTD" id="92565"/>
<dbReference type="MGI" id="MGI:1914180">
    <property type="gene designation" value="Fank1"/>
</dbReference>
<dbReference type="VEuPathDB" id="HostDB:ENSMUSG00000053111"/>
<dbReference type="eggNOG" id="KOG0504">
    <property type="taxonomic scope" value="Eukaryota"/>
</dbReference>
<dbReference type="GeneTree" id="ENSGT00940000160878"/>
<dbReference type="HOGENOM" id="CLU_000134_5_0_1"/>
<dbReference type="InParanoid" id="Q9DAM9"/>
<dbReference type="OMA" id="NFGHRLR"/>
<dbReference type="OrthoDB" id="9995210at2759"/>
<dbReference type="PhylomeDB" id="Q9DAM9"/>
<dbReference type="TreeFam" id="TF106234"/>
<dbReference type="BioGRID-ORCS" id="66930">
    <property type="hits" value="2 hits in 76 CRISPR screens"/>
</dbReference>
<dbReference type="ChiTaRS" id="Fank1">
    <property type="organism name" value="mouse"/>
</dbReference>
<dbReference type="EvolutionaryTrace" id="Q9DAM9"/>
<dbReference type="PRO" id="PR:Q9DAM9"/>
<dbReference type="Proteomes" id="UP000000589">
    <property type="component" value="Chromosome 7"/>
</dbReference>
<dbReference type="RNAct" id="Q9DAM9">
    <property type="molecule type" value="protein"/>
</dbReference>
<dbReference type="Bgee" id="ENSMUSG00000053111">
    <property type="expression patterns" value="Expressed in spermatid and 182 other cell types or tissues"/>
</dbReference>
<dbReference type="ExpressionAtlas" id="Q9DAM9">
    <property type="expression patterns" value="baseline and differential"/>
</dbReference>
<dbReference type="GO" id="GO:0000785">
    <property type="term" value="C:chromatin"/>
    <property type="evidence" value="ECO:0007669"/>
    <property type="project" value="Ensembl"/>
</dbReference>
<dbReference type="GO" id="GO:0036064">
    <property type="term" value="C:ciliary basal body"/>
    <property type="evidence" value="ECO:0000314"/>
    <property type="project" value="UniProtKB"/>
</dbReference>
<dbReference type="GO" id="GO:0097546">
    <property type="term" value="C:ciliary base"/>
    <property type="evidence" value="ECO:0000314"/>
    <property type="project" value="MGI"/>
</dbReference>
<dbReference type="GO" id="GO:0005929">
    <property type="term" value="C:cilium"/>
    <property type="evidence" value="ECO:0000314"/>
    <property type="project" value="UniProtKB"/>
</dbReference>
<dbReference type="GO" id="GO:0005829">
    <property type="term" value="C:cytosol"/>
    <property type="evidence" value="ECO:0000250"/>
    <property type="project" value="UniProtKB"/>
</dbReference>
<dbReference type="GO" id="GO:0005654">
    <property type="term" value="C:nucleoplasm"/>
    <property type="evidence" value="ECO:0007669"/>
    <property type="project" value="Ensembl"/>
</dbReference>
<dbReference type="GO" id="GO:0005634">
    <property type="term" value="C:nucleus"/>
    <property type="evidence" value="ECO:0000250"/>
    <property type="project" value="UniProtKB"/>
</dbReference>
<dbReference type="GO" id="GO:0051091">
    <property type="term" value="P:positive regulation of DNA-binding transcription factor activity"/>
    <property type="evidence" value="ECO:0000250"/>
    <property type="project" value="UniProtKB"/>
</dbReference>
<dbReference type="GO" id="GO:0045893">
    <property type="term" value="P:positive regulation of DNA-templated transcription"/>
    <property type="evidence" value="ECO:0000250"/>
    <property type="project" value="UniProtKB"/>
</dbReference>
<dbReference type="CDD" id="cd00063">
    <property type="entry name" value="FN3"/>
    <property type="match status" value="1"/>
</dbReference>
<dbReference type="FunFam" id="2.60.40.10:FF:000598">
    <property type="entry name" value="Fibronectin type 3 and ankyrin repeat domains protein 1"/>
    <property type="match status" value="1"/>
</dbReference>
<dbReference type="Gene3D" id="1.25.40.20">
    <property type="entry name" value="Ankyrin repeat-containing domain"/>
    <property type="match status" value="2"/>
</dbReference>
<dbReference type="Gene3D" id="2.60.40.10">
    <property type="entry name" value="Immunoglobulins"/>
    <property type="match status" value="1"/>
</dbReference>
<dbReference type="InterPro" id="IPR002110">
    <property type="entry name" value="Ankyrin_rpt"/>
</dbReference>
<dbReference type="InterPro" id="IPR036770">
    <property type="entry name" value="Ankyrin_rpt-contain_sf"/>
</dbReference>
<dbReference type="InterPro" id="IPR003961">
    <property type="entry name" value="FN3_dom"/>
</dbReference>
<dbReference type="InterPro" id="IPR036116">
    <property type="entry name" value="FN3_sf"/>
</dbReference>
<dbReference type="InterPro" id="IPR013783">
    <property type="entry name" value="Ig-like_fold"/>
</dbReference>
<dbReference type="PANTHER" id="PTHR24183">
    <property type="entry name" value="FIBRONECTIN TYPE 3 AND ANKYRIN REPEAT DOMAINS PROTEIN 1"/>
    <property type="match status" value="1"/>
</dbReference>
<dbReference type="PANTHER" id="PTHR24183:SF1">
    <property type="entry name" value="FIBRONECTIN TYPE 3 AND ANKYRIN REPEAT DOMAINS PROTEIN 1"/>
    <property type="match status" value="1"/>
</dbReference>
<dbReference type="Pfam" id="PF12796">
    <property type="entry name" value="Ank_2"/>
    <property type="match status" value="2"/>
</dbReference>
<dbReference type="PRINTS" id="PR01415">
    <property type="entry name" value="ANKYRIN"/>
</dbReference>
<dbReference type="SMART" id="SM00248">
    <property type="entry name" value="ANK"/>
    <property type="match status" value="5"/>
</dbReference>
<dbReference type="SMART" id="SM00060">
    <property type="entry name" value="FN3"/>
    <property type="match status" value="1"/>
</dbReference>
<dbReference type="SUPFAM" id="SSF48403">
    <property type="entry name" value="Ankyrin repeat"/>
    <property type="match status" value="1"/>
</dbReference>
<dbReference type="SUPFAM" id="SSF49265">
    <property type="entry name" value="Fibronectin type III"/>
    <property type="match status" value="1"/>
</dbReference>
<dbReference type="PROSITE" id="PS50297">
    <property type="entry name" value="ANK_REP_REGION"/>
    <property type="match status" value="1"/>
</dbReference>
<dbReference type="PROSITE" id="PS50088">
    <property type="entry name" value="ANK_REPEAT"/>
    <property type="match status" value="5"/>
</dbReference>
<dbReference type="PROSITE" id="PS50853">
    <property type="entry name" value="FN3"/>
    <property type="match status" value="1"/>
</dbReference>
<keyword id="KW-0002">3D-structure</keyword>
<keyword id="KW-0040">ANK repeat</keyword>
<keyword id="KW-0966">Cell projection</keyword>
<keyword id="KW-0963">Cytoplasm</keyword>
<keyword id="KW-0206">Cytoskeleton</keyword>
<keyword id="KW-0539">Nucleus</keyword>
<keyword id="KW-1185">Reference proteome</keyword>
<keyword id="KW-0677">Repeat</keyword>
<keyword id="KW-0832">Ubl conjugation</keyword>
<sequence length="344" mass="38260">MEPHKVVPLSKPHPPVVGKVTHHSIELYWDLEQKEKRQGPQEQWLRFSIEEEDPKMHSYGVIYTGYATRHVVEGLEPRTLYKFRLKVTSPSGEYEYSPVVSVATTREPISSEHFHRAVSVNDEDLLLRILEGGHVMIDVPNKFGFTALMVAAQKGYTRLVKILVSNGTDVNLKNGSGKDSLMLACYAGHLDVVKYLRRHGASWEARDLGGCTALHWAADGGHCSVIDWMIKDGCEVDVVDTGSGWTPLMRVSAVTGSQKVASLLIEAGADVNIKDKDGKTPLMVAVLNNHEQLVQLLLDKGADATVKNEFGKGVLEMARVFDRQNVLSLLEEKKKKMPRKSSVH</sequence>
<feature type="chain" id="PRO_0000066991" description="Fibronectin type 3 and ankyrin repeat domains 1 protein">
    <location>
        <begin position="1"/>
        <end position="344"/>
    </location>
</feature>
<feature type="domain" description="Fibronectin type-III" evidence="2">
    <location>
        <begin position="11"/>
        <end position="108"/>
    </location>
</feature>
<feature type="repeat" description="ANK 1">
    <location>
        <begin position="109"/>
        <end position="139"/>
    </location>
</feature>
<feature type="repeat" description="ANK 2">
    <location>
        <begin position="143"/>
        <end position="172"/>
    </location>
</feature>
<feature type="repeat" description="ANK 3">
    <location>
        <begin position="176"/>
        <end position="205"/>
    </location>
</feature>
<feature type="repeat" description="ANK 4">
    <location>
        <begin position="209"/>
        <end position="238"/>
    </location>
</feature>
<feature type="repeat" description="ANK 5">
    <location>
        <begin position="243"/>
        <end position="273"/>
    </location>
</feature>
<feature type="repeat" description="ANK 6">
    <location>
        <begin position="277"/>
        <end position="306"/>
    </location>
</feature>
<feature type="sequence conflict" description="In Ref. 2; BAB30580." evidence="6" ref="2">
    <original>I</original>
    <variation>T</variation>
    <location>
        <position position="162"/>
    </location>
</feature>
<feature type="sequence conflict" description="In Ref. 2; BAB30580." evidence="6" ref="2">
    <original>D</original>
    <variation>A</variation>
    <location>
        <position position="207"/>
    </location>
</feature>
<feature type="sequence conflict" description="In Ref. 2; BAB30580." evidence="6" ref="2">
    <original>A</original>
    <variation>P</variation>
    <location>
        <position position="261"/>
    </location>
</feature>
<feature type="strand" evidence="9">
    <location>
        <begin position="24"/>
        <end position="28"/>
    </location>
</feature>
<feature type="helix" evidence="9">
    <location>
        <begin position="41"/>
        <end position="43"/>
    </location>
</feature>
<feature type="strand" evidence="9">
    <location>
        <begin position="46"/>
        <end position="52"/>
    </location>
</feature>
<feature type="turn" evidence="9">
    <location>
        <begin position="54"/>
        <end position="56"/>
    </location>
</feature>
<feature type="strand" evidence="9">
    <location>
        <begin position="59"/>
        <end position="66"/>
    </location>
</feature>
<feature type="strand" evidence="9">
    <location>
        <begin position="68"/>
        <end position="74"/>
    </location>
</feature>
<feature type="strand" evidence="9">
    <location>
        <begin position="80"/>
        <end position="88"/>
    </location>
</feature>
<feature type="strand" evidence="9">
    <location>
        <begin position="90"/>
        <end position="92"/>
    </location>
</feature>
<feature type="strand" evidence="9">
    <location>
        <begin position="94"/>
        <end position="96"/>
    </location>
</feature>
<feature type="strand" evidence="9">
    <location>
        <begin position="100"/>
        <end position="103"/>
    </location>
</feature>
<protein>
    <recommendedName>
        <fullName evidence="6">Fibronectin type 3 and ankyrin repeat domains 1 protein</fullName>
    </recommendedName>
    <alternativeName>
        <fullName evidence="7">Germ cell-specific gene 1 protein</fullName>
        <shortName evidence="7">GSG1</shortName>
    </alternativeName>
</protein>
<reference key="1">
    <citation type="journal article" date="2005" name="Mol. Reprod. Dev.">
        <title>Specific maternal transcripts in bovine oocytes and cleavaged embryos: identification with novel DDRT-PCR methods.</title>
        <authorList>
            <person name="Hwang K.-C."/>
            <person name="Park S.-Y."/>
            <person name="Park S.-P."/>
            <person name="Lim J.H."/>
            <person name="Cui X.-S."/>
            <person name="Kim N.-H."/>
        </authorList>
    </citation>
    <scope>NUCLEOTIDE SEQUENCE [MRNA]</scope>
    <scope>DEVELOPMENTAL STAGE</scope>
    <source>
        <strain>ICR</strain>
        <tissue>Ovary</tissue>
    </source>
</reference>
<reference key="2">
    <citation type="journal article" date="2005" name="Science">
        <title>The transcriptional landscape of the mammalian genome.</title>
        <authorList>
            <person name="Carninci P."/>
            <person name="Kasukawa T."/>
            <person name="Katayama S."/>
            <person name="Gough J."/>
            <person name="Frith M.C."/>
            <person name="Maeda N."/>
            <person name="Oyama R."/>
            <person name="Ravasi T."/>
            <person name="Lenhard B."/>
            <person name="Wells C."/>
            <person name="Kodzius R."/>
            <person name="Shimokawa K."/>
            <person name="Bajic V.B."/>
            <person name="Brenner S.E."/>
            <person name="Batalov S."/>
            <person name="Forrest A.R."/>
            <person name="Zavolan M."/>
            <person name="Davis M.J."/>
            <person name="Wilming L.G."/>
            <person name="Aidinis V."/>
            <person name="Allen J.E."/>
            <person name="Ambesi-Impiombato A."/>
            <person name="Apweiler R."/>
            <person name="Aturaliya R.N."/>
            <person name="Bailey T.L."/>
            <person name="Bansal M."/>
            <person name="Baxter L."/>
            <person name="Beisel K.W."/>
            <person name="Bersano T."/>
            <person name="Bono H."/>
            <person name="Chalk A.M."/>
            <person name="Chiu K.P."/>
            <person name="Choudhary V."/>
            <person name="Christoffels A."/>
            <person name="Clutterbuck D.R."/>
            <person name="Crowe M.L."/>
            <person name="Dalla E."/>
            <person name="Dalrymple B.P."/>
            <person name="de Bono B."/>
            <person name="Della Gatta G."/>
            <person name="di Bernardo D."/>
            <person name="Down T."/>
            <person name="Engstrom P."/>
            <person name="Fagiolini M."/>
            <person name="Faulkner G."/>
            <person name="Fletcher C.F."/>
            <person name="Fukushima T."/>
            <person name="Furuno M."/>
            <person name="Futaki S."/>
            <person name="Gariboldi M."/>
            <person name="Georgii-Hemming P."/>
            <person name="Gingeras T.R."/>
            <person name="Gojobori T."/>
            <person name="Green R.E."/>
            <person name="Gustincich S."/>
            <person name="Harbers M."/>
            <person name="Hayashi Y."/>
            <person name="Hensch T.K."/>
            <person name="Hirokawa N."/>
            <person name="Hill D."/>
            <person name="Huminiecki L."/>
            <person name="Iacono M."/>
            <person name="Ikeo K."/>
            <person name="Iwama A."/>
            <person name="Ishikawa T."/>
            <person name="Jakt M."/>
            <person name="Kanapin A."/>
            <person name="Katoh M."/>
            <person name="Kawasawa Y."/>
            <person name="Kelso J."/>
            <person name="Kitamura H."/>
            <person name="Kitano H."/>
            <person name="Kollias G."/>
            <person name="Krishnan S.P."/>
            <person name="Kruger A."/>
            <person name="Kummerfeld S.K."/>
            <person name="Kurochkin I.V."/>
            <person name="Lareau L.F."/>
            <person name="Lazarevic D."/>
            <person name="Lipovich L."/>
            <person name="Liu J."/>
            <person name="Liuni S."/>
            <person name="McWilliam S."/>
            <person name="Madan Babu M."/>
            <person name="Madera M."/>
            <person name="Marchionni L."/>
            <person name="Matsuda H."/>
            <person name="Matsuzawa S."/>
            <person name="Miki H."/>
            <person name="Mignone F."/>
            <person name="Miyake S."/>
            <person name="Morris K."/>
            <person name="Mottagui-Tabar S."/>
            <person name="Mulder N."/>
            <person name="Nakano N."/>
            <person name="Nakauchi H."/>
            <person name="Ng P."/>
            <person name="Nilsson R."/>
            <person name="Nishiguchi S."/>
            <person name="Nishikawa S."/>
            <person name="Nori F."/>
            <person name="Ohara O."/>
            <person name="Okazaki Y."/>
            <person name="Orlando V."/>
            <person name="Pang K.C."/>
            <person name="Pavan W.J."/>
            <person name="Pavesi G."/>
            <person name="Pesole G."/>
            <person name="Petrovsky N."/>
            <person name="Piazza S."/>
            <person name="Reed J."/>
            <person name="Reid J.F."/>
            <person name="Ring B.Z."/>
            <person name="Ringwald M."/>
            <person name="Rost B."/>
            <person name="Ruan Y."/>
            <person name="Salzberg S.L."/>
            <person name="Sandelin A."/>
            <person name="Schneider C."/>
            <person name="Schoenbach C."/>
            <person name="Sekiguchi K."/>
            <person name="Semple C.A."/>
            <person name="Seno S."/>
            <person name="Sessa L."/>
            <person name="Sheng Y."/>
            <person name="Shibata Y."/>
            <person name="Shimada H."/>
            <person name="Shimada K."/>
            <person name="Silva D."/>
            <person name="Sinclair B."/>
            <person name="Sperling S."/>
            <person name="Stupka E."/>
            <person name="Sugiura K."/>
            <person name="Sultana R."/>
            <person name="Takenaka Y."/>
            <person name="Taki K."/>
            <person name="Tammoja K."/>
            <person name="Tan S.L."/>
            <person name="Tang S."/>
            <person name="Taylor M.S."/>
            <person name="Tegner J."/>
            <person name="Teichmann S.A."/>
            <person name="Ueda H.R."/>
            <person name="van Nimwegen E."/>
            <person name="Verardo R."/>
            <person name="Wei C.L."/>
            <person name="Yagi K."/>
            <person name="Yamanishi H."/>
            <person name="Zabarovsky E."/>
            <person name="Zhu S."/>
            <person name="Zimmer A."/>
            <person name="Hide W."/>
            <person name="Bult C."/>
            <person name="Grimmond S.M."/>
            <person name="Teasdale R.D."/>
            <person name="Liu E.T."/>
            <person name="Brusic V."/>
            <person name="Quackenbush J."/>
            <person name="Wahlestedt C."/>
            <person name="Mattick J.S."/>
            <person name="Hume D.A."/>
            <person name="Kai C."/>
            <person name="Sasaki D."/>
            <person name="Tomaru Y."/>
            <person name="Fukuda S."/>
            <person name="Kanamori-Katayama M."/>
            <person name="Suzuki M."/>
            <person name="Aoki J."/>
            <person name="Arakawa T."/>
            <person name="Iida J."/>
            <person name="Imamura K."/>
            <person name="Itoh M."/>
            <person name="Kato T."/>
            <person name="Kawaji H."/>
            <person name="Kawagashira N."/>
            <person name="Kawashima T."/>
            <person name="Kojima M."/>
            <person name="Kondo S."/>
            <person name="Konno H."/>
            <person name="Nakano K."/>
            <person name="Ninomiya N."/>
            <person name="Nishio T."/>
            <person name="Okada M."/>
            <person name="Plessy C."/>
            <person name="Shibata K."/>
            <person name="Shiraki T."/>
            <person name="Suzuki S."/>
            <person name="Tagami M."/>
            <person name="Waki K."/>
            <person name="Watahiki A."/>
            <person name="Okamura-Oho Y."/>
            <person name="Suzuki H."/>
            <person name="Kawai J."/>
            <person name="Hayashizaki Y."/>
        </authorList>
    </citation>
    <scope>NUCLEOTIDE SEQUENCE [LARGE SCALE MRNA]</scope>
    <source>
        <strain>C57BL/6J</strain>
        <tissue>Testis</tissue>
    </source>
</reference>
<reference key="3">
    <citation type="journal article" date="2004" name="Genome Res.">
        <title>The status, quality, and expansion of the NIH full-length cDNA project: the Mammalian Gene Collection (MGC).</title>
        <authorList>
            <consortium name="The MGC Project Team"/>
        </authorList>
    </citation>
    <scope>NUCLEOTIDE SEQUENCE [LARGE SCALE MRNA]</scope>
    <source>
        <tissue>Olfactory epithelium</tissue>
    </source>
</reference>
<reference key="4">
    <citation type="journal article" date="2010" name="Cell">
        <title>A tissue-specific atlas of mouse protein phosphorylation and expression.</title>
        <authorList>
            <person name="Huttlin E.L."/>
            <person name="Jedrychowski M.P."/>
            <person name="Elias J.E."/>
            <person name="Goswami T."/>
            <person name="Rad R."/>
            <person name="Beausoleil S.A."/>
            <person name="Villen J."/>
            <person name="Haas W."/>
            <person name="Sowa M.E."/>
            <person name="Gygi S.P."/>
        </authorList>
    </citation>
    <scope>IDENTIFICATION BY MASS SPECTROMETRY [LARGE SCALE ANALYSIS]</scope>
    <source>
        <tissue>Testis</tissue>
    </source>
</reference>
<reference key="5">
    <citation type="submission" date="2004-11" db="PDB data bank">
        <title>Solution structure of fibronectin type-III domain of mouse hypothetical protein BAB30580.</title>
        <authorList>
            <consortium name="RIKEN structural genomics initiative (RSGI)"/>
        </authorList>
    </citation>
    <scope>STRUCTURE BY NMR OF 1-107</scope>
</reference>
<reference key="6">
    <citation type="journal article" date="2007" name="Gene Expr. Patterns">
        <title>Fank1 is a testis-specific gene encoding a nuclear protein exclusively expressed during the transition from the meiotic to the haploid phase of spermatogenesis.</title>
        <authorList>
            <person name="Zheng Z."/>
            <person name="Zheng H."/>
            <person name="Yan W."/>
        </authorList>
    </citation>
    <scope>SUBCELLULAR LOCATION</scope>
    <scope>TISSUE SPECIFICITY</scope>
    <scope>DEVELOPMENTAL STAGE</scope>
</reference>
<reference key="7">
    <citation type="journal article" date="2017" name="Dev. Biol.">
        <title>Identification of FOXJ1 effectors during ciliogenesis in the foetal respiratory epithelium and embryonic left-right organiser of the mouse.</title>
        <authorList>
            <person name="Stauber M."/>
            <person name="Weidemann M."/>
            <person name="Dittrich-Breiholz O."/>
            <person name="Lobschat K."/>
            <person name="Alten L."/>
            <person name="Mai M."/>
            <person name="Beckers A."/>
            <person name="Kracht M."/>
            <person name="Gossler A."/>
        </authorList>
    </citation>
    <scope>SUBCELLULAR LOCATION</scope>
    <scope>INDUCTION</scope>
</reference>
<comment type="function">
    <text evidence="1">Through the activation of JUN and AP-1-mediated transcription, may regulate apoptosis.</text>
</comment>
<comment type="subunit">
    <text evidence="1">Interacts with COPS5; regulates the phosphorylation of JUN and the transcriptional activity of AP-1. Interacts with RYBP; may prevent the ubiquitin-mediated proteasomal degradation of FANK1.</text>
</comment>
<comment type="subcellular location">
    <subcellularLocation>
        <location evidence="4">Nucleus</location>
    </subcellularLocation>
    <subcellularLocation>
        <location evidence="1">Cytoplasm</location>
        <location evidence="1">Cytosol</location>
    </subcellularLocation>
    <subcellularLocation>
        <location evidence="5">Cytoplasm</location>
        <location evidence="5">Cytoskeleton</location>
        <location evidence="5">Cilium basal body</location>
    </subcellularLocation>
    <subcellularLocation>
        <location evidence="5">Cell projection</location>
        <location evidence="5">Cilium</location>
    </subcellularLocation>
    <text evidence="4">Weakly detected in the cytoplasm of elongated spermatids.</text>
</comment>
<comment type="tissue specificity">
    <text evidence="4">Mostly restricted to testis (at protein level), including mid to late pachytene spermatocytes (stages VI-X), diplotene spermatocytes (stage XI), meiotically dividing spermatocytes (stage XII) and spermatids in steps 1-14. Highest levels in late pachytene spermatocytes and spermatids in steps 1-9.</text>
</comment>
<comment type="developmental stage">
    <text evidence="3 4">In the developing testis, first detected at postnatal day 14 (P14) and levels increase after P20 (at protein level). At P20, detected in pachytene spermatocytes and round spermatids, but not in preleptotene and leptotene spermatocytes. Not detected in testis at P10. Detected in germinal vesicle (GV) stage oocytes and in embryos up to the 2-cell stage, but not in morula or blastocysts.</text>
</comment>
<comment type="induction">
    <text evidence="5">Expression is activated by FOXJ1.</text>
</comment>
<comment type="domain">
    <text evidence="1">The fibronectin type-III domain mediates interaction with COPS5 and RYBP.</text>
</comment>
<comment type="PTM">
    <text evidence="1">Polyubiquitinated. Polyubiquitination leads to proteasomal degradation.</text>
</comment>
<accession>Q9DAM9</accession>
<accession>Q9CUA7</accession>
<evidence type="ECO:0000250" key="1">
    <source>
        <dbReference type="UniProtKB" id="Q8TC84"/>
    </source>
</evidence>
<evidence type="ECO:0000255" key="2">
    <source>
        <dbReference type="PROSITE-ProRule" id="PRU00316"/>
    </source>
</evidence>
<evidence type="ECO:0000269" key="3">
    <source>
    </source>
</evidence>
<evidence type="ECO:0000269" key="4">
    <source>
    </source>
</evidence>
<evidence type="ECO:0000269" key="5">
    <source>
    </source>
</evidence>
<evidence type="ECO:0000305" key="6"/>
<evidence type="ECO:0000312" key="7">
    <source>
        <dbReference type="EMBL" id="AAV68048.1"/>
    </source>
</evidence>
<evidence type="ECO:0000312" key="8">
    <source>
        <dbReference type="MGI" id="MGI:1914180"/>
    </source>
</evidence>
<evidence type="ECO:0007829" key="9">
    <source>
        <dbReference type="PDB" id="1WFU"/>
    </source>
</evidence>
<organism>
    <name type="scientific">Mus musculus</name>
    <name type="common">Mouse</name>
    <dbReference type="NCBI Taxonomy" id="10090"/>
    <lineage>
        <taxon>Eukaryota</taxon>
        <taxon>Metazoa</taxon>
        <taxon>Chordata</taxon>
        <taxon>Craniata</taxon>
        <taxon>Vertebrata</taxon>
        <taxon>Euteleostomi</taxon>
        <taxon>Mammalia</taxon>
        <taxon>Eutheria</taxon>
        <taxon>Euarchontoglires</taxon>
        <taxon>Glires</taxon>
        <taxon>Rodentia</taxon>
        <taxon>Myomorpha</taxon>
        <taxon>Muroidea</taxon>
        <taxon>Muridae</taxon>
        <taxon>Murinae</taxon>
        <taxon>Mus</taxon>
        <taxon>Mus</taxon>
    </lineage>
</organism>
<gene>
    <name evidence="8" type="primary">Fank1</name>
</gene>
<proteinExistence type="evidence at protein level"/>
<name>FANK1_MOUSE</name>